<name>Y1899_MYCTU</name>
<sequence>MAAMRAHARRRHPHALMSRAAGLPRLSWFAGLTWFAGGSTGAGCAAHPALAGLTAGARCPAYAAISASTARPAATAGTTPATGASGSARPTDAAGMADLARPGVVATHAVRTLGTTGSRAIGLCPCQPLDCPRSPQATLNLGSMGRSLDGPQWRRARVRLCGRWWRRSNTTRGASPRPPSTCRGDNVSMIELEVHQADVTKLELDAITNAANTRLRHAGGVAAAIARAGGPELQRESTEKAPIGLGEAVETTAGDMPARYVIHAATMELGGPTSGEIITAATAATLRKADELGCRSLALVAFGTGVGGFPLDDAARLMVGAVRRHRPGSLQRVVFAVHGDAAERAFSAAIQAGEDTARR</sequence>
<gene>
    <name type="ordered locus">Rv1899c</name>
    <name type="ORF">MTCY180.19</name>
</gene>
<dbReference type="EMBL" id="AL123456">
    <property type="protein sequence ID" value="CCP44666.1"/>
    <property type="status" value="ALT_INIT"/>
    <property type="molecule type" value="Genomic_DNA"/>
</dbReference>
<dbReference type="PIR" id="H70517">
    <property type="entry name" value="H70517"/>
</dbReference>
<dbReference type="RefSeq" id="WP_003905677.1">
    <property type="nucleotide sequence ID" value="NC_000962.3"/>
</dbReference>
<dbReference type="SMR" id="P9WK29"/>
<dbReference type="STRING" id="83332.Rv1899c"/>
<dbReference type="PaxDb" id="83332-Rv1899c"/>
<dbReference type="KEGG" id="mtu:Rv1899c"/>
<dbReference type="PATRIC" id="fig|83332.12.peg.2121"/>
<dbReference type="TubercuList" id="Rv1899c"/>
<dbReference type="eggNOG" id="COG2110">
    <property type="taxonomic scope" value="Bacteria"/>
</dbReference>
<dbReference type="InParanoid" id="P9WK29"/>
<dbReference type="OrthoDB" id="6194521at2"/>
<dbReference type="Proteomes" id="UP000001584">
    <property type="component" value="Chromosome"/>
</dbReference>
<dbReference type="GO" id="GO:0005576">
    <property type="term" value="C:extracellular region"/>
    <property type="evidence" value="ECO:0007005"/>
    <property type="project" value="MTBBASE"/>
</dbReference>
<dbReference type="GO" id="GO:0005886">
    <property type="term" value="C:plasma membrane"/>
    <property type="evidence" value="ECO:0007005"/>
    <property type="project" value="MTBBASE"/>
</dbReference>
<dbReference type="Gene3D" id="3.40.220.10">
    <property type="entry name" value="Leucine Aminopeptidase, subunit E, domain 1"/>
    <property type="match status" value="1"/>
</dbReference>
<dbReference type="InterPro" id="IPR002589">
    <property type="entry name" value="Macro_dom"/>
</dbReference>
<dbReference type="InterPro" id="IPR043472">
    <property type="entry name" value="Macro_dom-like"/>
</dbReference>
<dbReference type="PANTHER" id="PTHR11106">
    <property type="entry name" value="GANGLIOSIDE INDUCED DIFFERENTIATION ASSOCIATED PROTEIN 2-RELATED"/>
    <property type="match status" value="1"/>
</dbReference>
<dbReference type="PANTHER" id="PTHR11106:SF111">
    <property type="entry name" value="MACRO DOMAIN-CONTAINING PROTEIN"/>
    <property type="match status" value="1"/>
</dbReference>
<dbReference type="Pfam" id="PF01661">
    <property type="entry name" value="Macro"/>
    <property type="match status" value="1"/>
</dbReference>
<dbReference type="SMART" id="SM00506">
    <property type="entry name" value="A1pp"/>
    <property type="match status" value="1"/>
</dbReference>
<dbReference type="SUPFAM" id="SSF52949">
    <property type="entry name" value="Macro domain-like"/>
    <property type="match status" value="1"/>
</dbReference>
<dbReference type="PROSITE" id="PS51154">
    <property type="entry name" value="MACRO"/>
    <property type="match status" value="1"/>
</dbReference>
<keyword id="KW-1185">Reference proteome</keyword>
<reference key="1">
    <citation type="journal article" date="1998" name="Nature">
        <title>Deciphering the biology of Mycobacterium tuberculosis from the complete genome sequence.</title>
        <authorList>
            <person name="Cole S.T."/>
            <person name="Brosch R."/>
            <person name="Parkhill J."/>
            <person name="Garnier T."/>
            <person name="Churcher C.M."/>
            <person name="Harris D.E."/>
            <person name="Gordon S.V."/>
            <person name="Eiglmeier K."/>
            <person name="Gas S."/>
            <person name="Barry C.E. III"/>
            <person name="Tekaia F."/>
            <person name="Badcock K."/>
            <person name="Basham D."/>
            <person name="Brown D."/>
            <person name="Chillingworth T."/>
            <person name="Connor R."/>
            <person name="Davies R.M."/>
            <person name="Devlin K."/>
            <person name="Feltwell T."/>
            <person name="Gentles S."/>
            <person name="Hamlin N."/>
            <person name="Holroyd S."/>
            <person name="Hornsby T."/>
            <person name="Jagels K."/>
            <person name="Krogh A."/>
            <person name="McLean J."/>
            <person name="Moule S."/>
            <person name="Murphy L.D."/>
            <person name="Oliver S."/>
            <person name="Osborne J."/>
            <person name="Quail M.A."/>
            <person name="Rajandream M.A."/>
            <person name="Rogers J."/>
            <person name="Rutter S."/>
            <person name="Seeger K."/>
            <person name="Skelton S."/>
            <person name="Squares S."/>
            <person name="Squares R."/>
            <person name="Sulston J.E."/>
            <person name="Taylor K."/>
            <person name="Whitehead S."/>
            <person name="Barrell B.G."/>
        </authorList>
    </citation>
    <scope>NUCLEOTIDE SEQUENCE [LARGE SCALE GENOMIC DNA]</scope>
    <source>
        <strain>ATCC 25618 / H37Rv</strain>
    </source>
</reference>
<reference key="2">
    <citation type="journal article" date="2011" name="Mol. Cell. Proteomics">
        <title>Proteogenomic analysis of Mycobacterium tuberculosis by high resolution mass spectrometry.</title>
        <authorList>
            <person name="Kelkar D.S."/>
            <person name="Kumar D."/>
            <person name="Kumar P."/>
            <person name="Balakrishnan L."/>
            <person name="Muthusamy B."/>
            <person name="Yadav A.K."/>
            <person name="Shrivastava P."/>
            <person name="Marimuthu A."/>
            <person name="Anand S."/>
            <person name="Sundaram H."/>
            <person name="Kingsbury R."/>
            <person name="Harsha H.C."/>
            <person name="Nair B."/>
            <person name="Prasad T.S."/>
            <person name="Chauhan D.S."/>
            <person name="Katoch K."/>
            <person name="Katoch V.M."/>
            <person name="Kumar P."/>
            <person name="Chaerkady R."/>
            <person name="Ramachandran S."/>
            <person name="Dash D."/>
            <person name="Pandey A."/>
        </authorList>
    </citation>
    <scope>IDENTIFICATION BY MASS SPECTROMETRY [LARGE SCALE ANALYSIS]</scope>
    <source>
        <strain>ATCC 25618 / H37Rv</strain>
    </source>
</reference>
<accession>P9WK29</accession>
<accession>L0T9K7</accession>
<accession>O07733</accession>
<accession>Q8VJU7</accession>
<feature type="chain" id="PRO_0000089202" description="Uncharacterized protein Rv1899c">
    <location>
        <begin position="1"/>
        <end position="359"/>
    </location>
</feature>
<feature type="domain" description="Macro" evidence="1">
    <location>
        <begin position="179"/>
        <end position="354"/>
    </location>
</feature>
<feature type="region of interest" description="Disordered" evidence="2">
    <location>
        <begin position="73"/>
        <end position="93"/>
    </location>
</feature>
<feature type="compositionally biased region" description="Low complexity" evidence="2">
    <location>
        <begin position="73"/>
        <end position="88"/>
    </location>
</feature>
<organism>
    <name type="scientific">Mycobacterium tuberculosis (strain ATCC 25618 / H37Rv)</name>
    <dbReference type="NCBI Taxonomy" id="83332"/>
    <lineage>
        <taxon>Bacteria</taxon>
        <taxon>Bacillati</taxon>
        <taxon>Actinomycetota</taxon>
        <taxon>Actinomycetes</taxon>
        <taxon>Mycobacteriales</taxon>
        <taxon>Mycobacteriaceae</taxon>
        <taxon>Mycobacterium</taxon>
        <taxon>Mycobacterium tuberculosis complex</taxon>
    </lineage>
</organism>
<evidence type="ECO:0000255" key="1">
    <source>
        <dbReference type="PROSITE-ProRule" id="PRU00490"/>
    </source>
</evidence>
<evidence type="ECO:0000256" key="2">
    <source>
        <dbReference type="SAM" id="MobiDB-lite"/>
    </source>
</evidence>
<evidence type="ECO:0000305" key="3"/>
<proteinExistence type="evidence at protein level"/>
<comment type="sequence caution" evidence="3">
    <conflict type="erroneous initiation">
        <sequence resource="EMBL-CDS" id="CCP44666"/>
    </conflict>
    <text>Truncated N-terminus.</text>
</comment>
<protein>
    <recommendedName>
        <fullName>Uncharacterized protein Rv1899c</fullName>
    </recommendedName>
</protein>